<keyword id="KW-0004">4Fe-4S</keyword>
<keyword id="KW-0903">Direct protein sequencing</keyword>
<keyword id="KW-0249">Electron transport</keyword>
<keyword id="KW-0408">Iron</keyword>
<keyword id="KW-0411">Iron-sulfur</keyword>
<keyword id="KW-0472">Membrane</keyword>
<keyword id="KW-0479">Metal-binding</keyword>
<keyword id="KW-0496">Mitochondrion</keyword>
<keyword id="KW-0999">Mitochondrion inner membrane</keyword>
<keyword id="KW-0520">NAD</keyword>
<keyword id="KW-0560">Oxidoreductase</keyword>
<keyword id="KW-1185">Reference proteome</keyword>
<keyword id="KW-0679">Respiratory chain</keyword>
<keyword id="KW-0809">Transit peptide</keyword>
<keyword id="KW-1278">Translocase</keyword>
<keyword id="KW-0813">Transport</keyword>
<keyword id="KW-0830">Ubiquinone</keyword>
<evidence type="ECO:0000255" key="1"/>
<evidence type="ECO:0000269" key="2">
    <source>
    </source>
</evidence>
<evidence type="ECO:0000305" key="3"/>
<proteinExistence type="evidence at protein level"/>
<accession>P22142</accession>
<accession>Q7RVM8</accession>
<comment type="function">
    <text>Core subunit of the mitochondrial membrane respiratory chain NADH dehydrogenase (Complex I) that is believed to belong to the minimal assembly required for catalysis. Complex I functions in the transfer of electrons from NADH to the respiratory chain. The immediate electron acceptor for the enzyme is believed to be ubiquinone.</text>
</comment>
<comment type="catalytic activity">
    <reaction>
        <text>a ubiquinone + NADH + 5 H(+)(in) = a ubiquinol + NAD(+) + 4 H(+)(out)</text>
        <dbReference type="Rhea" id="RHEA:29091"/>
        <dbReference type="Rhea" id="RHEA-COMP:9565"/>
        <dbReference type="Rhea" id="RHEA-COMP:9566"/>
        <dbReference type="ChEBI" id="CHEBI:15378"/>
        <dbReference type="ChEBI" id="CHEBI:16389"/>
        <dbReference type="ChEBI" id="CHEBI:17976"/>
        <dbReference type="ChEBI" id="CHEBI:57540"/>
        <dbReference type="ChEBI" id="CHEBI:57945"/>
        <dbReference type="EC" id="7.1.1.2"/>
    </reaction>
</comment>
<comment type="cofactor">
    <cofactor>
        <name>[4Fe-4S] cluster</name>
        <dbReference type="ChEBI" id="CHEBI:49883"/>
    </cofactor>
    <text>Binds 1 [4Fe-4S] cluster.</text>
</comment>
<comment type="subunit">
    <text>Complex I is composed of about 40 different subunits.</text>
</comment>
<comment type="subcellular location">
    <subcellularLocation>
        <location>Mitochondrion inner membrane</location>
        <topology>Peripheral membrane protein</topology>
        <orientation>Matrix side</orientation>
    </subcellularLocation>
</comment>
<comment type="similarity">
    <text evidence="3">Belongs to the complex I 49 kDa subunit family.</text>
</comment>
<organism>
    <name type="scientific">Neurospora crassa (strain ATCC 24698 / 74-OR23-1A / CBS 708.71 / DSM 1257 / FGSC 987)</name>
    <dbReference type="NCBI Taxonomy" id="367110"/>
    <lineage>
        <taxon>Eukaryota</taxon>
        <taxon>Fungi</taxon>
        <taxon>Dikarya</taxon>
        <taxon>Ascomycota</taxon>
        <taxon>Pezizomycotina</taxon>
        <taxon>Sordariomycetes</taxon>
        <taxon>Sordariomycetidae</taxon>
        <taxon>Sordariales</taxon>
        <taxon>Sordariaceae</taxon>
        <taxon>Neurospora</taxon>
    </lineage>
</organism>
<reference key="1">
    <citation type="journal article" date="1990" name="Curr. Genet.">
        <title>The 49 K subunit of NADH: ubiquinone reductase (complex I) from Neurospora crassa mitochondria: primary structure of the gene and the protein.</title>
        <authorList>
            <person name="Preis D."/>
            <person name="van der Pas J.C."/>
            <person name="Nehls U."/>
            <person name="Roehlen D.-A."/>
            <person name="Sackmann U."/>
            <person name="Jahnke U."/>
            <person name="Weiss H."/>
        </authorList>
    </citation>
    <scope>NUCLEOTIDE SEQUENCE [GENOMIC DNA]</scope>
    <scope>PROTEIN SEQUENCE OF 43-62</scope>
    <source>
        <strain>74-ORS-6a / FGSC 4200</strain>
    </source>
</reference>
<reference key="2">
    <citation type="journal article" date="2003" name="Nature">
        <title>The genome sequence of the filamentous fungus Neurospora crassa.</title>
        <authorList>
            <person name="Galagan J.E."/>
            <person name="Calvo S.E."/>
            <person name="Borkovich K.A."/>
            <person name="Selker E.U."/>
            <person name="Read N.D."/>
            <person name="Jaffe D.B."/>
            <person name="FitzHugh W."/>
            <person name="Ma L.-J."/>
            <person name="Smirnov S."/>
            <person name="Purcell S."/>
            <person name="Rehman B."/>
            <person name="Elkins T."/>
            <person name="Engels R."/>
            <person name="Wang S."/>
            <person name="Nielsen C.B."/>
            <person name="Butler J."/>
            <person name="Endrizzi M."/>
            <person name="Qui D."/>
            <person name="Ianakiev P."/>
            <person name="Bell-Pedersen D."/>
            <person name="Nelson M.A."/>
            <person name="Werner-Washburne M."/>
            <person name="Selitrennikoff C.P."/>
            <person name="Kinsey J.A."/>
            <person name="Braun E.L."/>
            <person name="Zelter A."/>
            <person name="Schulte U."/>
            <person name="Kothe G.O."/>
            <person name="Jedd G."/>
            <person name="Mewes H.-W."/>
            <person name="Staben C."/>
            <person name="Marcotte E."/>
            <person name="Greenberg D."/>
            <person name="Roy A."/>
            <person name="Foley K."/>
            <person name="Naylor J."/>
            <person name="Stange-Thomann N."/>
            <person name="Barrett R."/>
            <person name="Gnerre S."/>
            <person name="Kamal M."/>
            <person name="Kamvysselis M."/>
            <person name="Mauceli E.W."/>
            <person name="Bielke C."/>
            <person name="Rudd S."/>
            <person name="Frishman D."/>
            <person name="Krystofova S."/>
            <person name="Rasmussen C."/>
            <person name="Metzenberg R.L."/>
            <person name="Perkins D.D."/>
            <person name="Kroken S."/>
            <person name="Cogoni C."/>
            <person name="Macino G."/>
            <person name="Catcheside D.E.A."/>
            <person name="Li W."/>
            <person name="Pratt R.J."/>
            <person name="Osmani S.A."/>
            <person name="DeSouza C.P.C."/>
            <person name="Glass N.L."/>
            <person name="Orbach M.J."/>
            <person name="Berglund J.A."/>
            <person name="Voelker R."/>
            <person name="Yarden O."/>
            <person name="Plamann M."/>
            <person name="Seiler S."/>
            <person name="Dunlap J.C."/>
            <person name="Radford A."/>
            <person name="Aramayo R."/>
            <person name="Natvig D.O."/>
            <person name="Alex L.A."/>
            <person name="Mannhaupt G."/>
            <person name="Ebbole D.J."/>
            <person name="Freitag M."/>
            <person name="Paulsen I."/>
            <person name="Sachs M.S."/>
            <person name="Lander E.S."/>
            <person name="Nusbaum C."/>
            <person name="Birren B.W."/>
        </authorList>
    </citation>
    <scope>NUCLEOTIDE SEQUENCE [LARGE SCALE GENOMIC DNA]</scope>
    <source>
        <strain>ATCC 24698 / 74-OR23-1A / CBS 708.71 / DSM 1257 / FGSC 987</strain>
    </source>
</reference>
<name>NDUS2_NEUCR</name>
<feature type="transit peptide" description="Mitochondrion" evidence="2">
    <location>
        <begin position="1"/>
        <end position="42"/>
    </location>
</feature>
<feature type="chain" id="PRO_0000019984" description="NADH-ubiquinone oxidoreductase 49 kDa subunit, mitochondrial">
    <location>
        <begin position="43"/>
        <end position="478"/>
    </location>
</feature>
<feature type="binding site" evidence="1">
    <location>
        <position position="341"/>
    </location>
    <ligand>
        <name>[4Fe-4S] cluster</name>
        <dbReference type="ChEBI" id="CHEBI:49883"/>
    </ligand>
</feature>
<feature type="binding site" evidence="1">
    <location>
        <position position="347"/>
    </location>
    <ligand>
        <name>[4Fe-4S] cluster</name>
        <dbReference type="ChEBI" id="CHEBI:49883"/>
    </ligand>
</feature>
<feature type="binding site" evidence="1">
    <location>
        <position position="362"/>
    </location>
    <ligand>
        <name>[4Fe-4S] cluster</name>
        <dbReference type="ChEBI" id="CHEBI:49883"/>
    </ligand>
</feature>
<feature type="sequence conflict" description="In Ref. 1; CAA38368." evidence="3" ref="1">
    <original>A</original>
    <variation>G</variation>
    <location>
        <position position="417"/>
    </location>
</feature>
<protein>
    <recommendedName>
        <fullName>NADH-ubiquinone oxidoreductase 49 kDa subunit, mitochondrial</fullName>
        <ecNumber>7.1.1.2</ecNumber>
    </recommendedName>
    <alternativeName>
        <fullName>Complex I-49kD</fullName>
        <shortName>CI-49kD</shortName>
    </alternativeName>
</protein>
<dbReference type="EC" id="7.1.1.2"/>
<dbReference type="EMBL" id="X54508">
    <property type="protein sequence ID" value="CAA38368.1"/>
    <property type="molecule type" value="Genomic_DNA"/>
</dbReference>
<dbReference type="EMBL" id="CM002236">
    <property type="protein sequence ID" value="EAA36429.2"/>
    <property type="molecule type" value="Genomic_DNA"/>
</dbReference>
<dbReference type="PIR" id="S13801">
    <property type="entry name" value="S13801"/>
</dbReference>
<dbReference type="SMR" id="P22142"/>
<dbReference type="STRING" id="367110.P22142"/>
<dbReference type="TCDB" id="3.D.1.6.2">
    <property type="family name" value="the h+ or na+-translocating nadh dehydrogenase (ndh) family"/>
</dbReference>
<dbReference type="PaxDb" id="5141-EFNCRP00000002181"/>
<dbReference type="EnsemblFungi" id="EAA36429">
    <property type="protein sequence ID" value="EAA36429"/>
    <property type="gene ID" value="NCU02534"/>
</dbReference>
<dbReference type="KEGG" id="ncr:NCU02534"/>
<dbReference type="VEuPathDB" id="FungiDB:NCU02534"/>
<dbReference type="HOGENOM" id="CLU_015134_1_1_1"/>
<dbReference type="InParanoid" id="P22142"/>
<dbReference type="OrthoDB" id="1009at2759"/>
<dbReference type="Proteomes" id="UP000001805">
    <property type="component" value="Chromosome 1, Linkage Group I"/>
</dbReference>
<dbReference type="GO" id="GO:0005743">
    <property type="term" value="C:mitochondrial inner membrane"/>
    <property type="evidence" value="ECO:0007669"/>
    <property type="project" value="UniProtKB-SubCell"/>
</dbReference>
<dbReference type="GO" id="GO:0045271">
    <property type="term" value="C:respiratory chain complex I"/>
    <property type="evidence" value="ECO:0000318"/>
    <property type="project" value="GO_Central"/>
</dbReference>
<dbReference type="GO" id="GO:0051539">
    <property type="term" value="F:4 iron, 4 sulfur cluster binding"/>
    <property type="evidence" value="ECO:0007669"/>
    <property type="project" value="UniProtKB-KW"/>
</dbReference>
<dbReference type="GO" id="GO:0046872">
    <property type="term" value="F:metal ion binding"/>
    <property type="evidence" value="ECO:0007669"/>
    <property type="project" value="UniProtKB-KW"/>
</dbReference>
<dbReference type="GO" id="GO:0051287">
    <property type="term" value="F:NAD binding"/>
    <property type="evidence" value="ECO:0007669"/>
    <property type="project" value="InterPro"/>
</dbReference>
<dbReference type="GO" id="GO:0008137">
    <property type="term" value="F:NADH dehydrogenase (ubiquinone) activity"/>
    <property type="evidence" value="ECO:0007669"/>
    <property type="project" value="UniProtKB-EC"/>
</dbReference>
<dbReference type="GO" id="GO:0048038">
    <property type="term" value="F:quinone binding"/>
    <property type="evidence" value="ECO:0007669"/>
    <property type="project" value="InterPro"/>
</dbReference>
<dbReference type="GO" id="GO:0006120">
    <property type="term" value="P:mitochondrial electron transport, NADH to ubiquinone"/>
    <property type="evidence" value="ECO:0000318"/>
    <property type="project" value="GO_Central"/>
</dbReference>
<dbReference type="FunFam" id="1.10.645.10:FF:000005">
    <property type="entry name" value="NADH-quinone oxidoreductase subunit D"/>
    <property type="match status" value="1"/>
</dbReference>
<dbReference type="Gene3D" id="1.10.645.10">
    <property type="entry name" value="Cytochrome-c3 Hydrogenase, chain B"/>
    <property type="match status" value="1"/>
</dbReference>
<dbReference type="HAMAP" id="MF_01358">
    <property type="entry name" value="NDH1_NuoD"/>
    <property type="match status" value="1"/>
</dbReference>
<dbReference type="InterPro" id="IPR001135">
    <property type="entry name" value="NADH_Q_OxRdtase_suD"/>
</dbReference>
<dbReference type="InterPro" id="IPR014029">
    <property type="entry name" value="NADH_UbQ_OxRdtase_49kDa_CS"/>
</dbReference>
<dbReference type="InterPro" id="IPR022885">
    <property type="entry name" value="NDH1_su_D/H"/>
</dbReference>
<dbReference type="InterPro" id="IPR029014">
    <property type="entry name" value="NiFe-Hase_large"/>
</dbReference>
<dbReference type="NCBIfam" id="TIGR01962">
    <property type="entry name" value="NuoD"/>
    <property type="match status" value="1"/>
</dbReference>
<dbReference type="NCBIfam" id="NF004739">
    <property type="entry name" value="PRK06075.1"/>
    <property type="match status" value="1"/>
</dbReference>
<dbReference type="PANTHER" id="PTHR11993:SF10">
    <property type="entry name" value="NADH DEHYDROGENASE [UBIQUINONE] IRON-SULFUR PROTEIN 2, MITOCHONDRIAL"/>
    <property type="match status" value="1"/>
</dbReference>
<dbReference type="PANTHER" id="PTHR11993">
    <property type="entry name" value="NADH-UBIQUINONE OXIDOREDUCTASE 49 KDA SUBUNIT"/>
    <property type="match status" value="1"/>
</dbReference>
<dbReference type="Pfam" id="PF00346">
    <property type="entry name" value="Complex1_49kDa"/>
    <property type="match status" value="1"/>
</dbReference>
<dbReference type="SUPFAM" id="SSF56762">
    <property type="entry name" value="HydB/Nqo4-like"/>
    <property type="match status" value="1"/>
</dbReference>
<dbReference type="PROSITE" id="PS00535">
    <property type="entry name" value="COMPLEX1_49K"/>
    <property type="match status" value="1"/>
</dbReference>
<gene>
    <name type="primary">nuo-49</name>
    <name type="ORF">NCU02534</name>
</gene>
<sequence>MATTLFRLAGRNAKRHCMRQSTTIAHNLNSTRAFSASALRRYAEPSYEGQGTRLVPTGDDFAPNNDLYGLEALKADGAPRVPPQDHILARKVRHYTVNFGPQHPAAHGVLRLILELKGEEIVRADPHVGLLHRGTEKLCEYRTYLQALPYFDRLDYVSMMTNEQCFALAVEKLLNVEIPERAKWIRTMFAEITRILNHLMSVLSHAMDVGALTPFLWGFEEREKLMEFYERVSGARLHAAYVRPGGVHQDIPLGLLDDIYMWATQFGDRIDETEEMLTDNRIWIDRLRGIGVVSAADALNLSFTGVMLRGSGVPWDIRKSQPYDAYDQVEFDVPVGINGDCYDRYLCRMEEFRQSLRIIHQCLNKMPAGPVRVEDYKISPPPRSAMKENMEALIHHFLLYTKGYAVPPGDTYSAIEAPKGEMGVYVVSDGSERPYRVHIRAPGFAHLGGFDHLSRGHMLADAVAVIGTMDLVFGEVDR</sequence>